<comment type="function">
    <text evidence="1">DNA-dependent RNA polymerase catalyzes the transcription of DNA into RNA using the four ribonucleoside triphosphates as substrates.</text>
</comment>
<comment type="catalytic activity">
    <reaction evidence="1">
        <text>RNA(n) + a ribonucleoside 5'-triphosphate = RNA(n+1) + diphosphate</text>
        <dbReference type="Rhea" id="RHEA:21248"/>
        <dbReference type="Rhea" id="RHEA-COMP:14527"/>
        <dbReference type="Rhea" id="RHEA-COMP:17342"/>
        <dbReference type="ChEBI" id="CHEBI:33019"/>
        <dbReference type="ChEBI" id="CHEBI:61557"/>
        <dbReference type="ChEBI" id="CHEBI:140395"/>
        <dbReference type="EC" id="2.7.7.6"/>
    </reaction>
</comment>
<comment type="cofactor">
    <cofactor evidence="1">
        <name>Mg(2+)</name>
        <dbReference type="ChEBI" id="CHEBI:18420"/>
    </cofactor>
    <text evidence="1">Binds 1 Mg(2+) ion per subunit.</text>
</comment>
<comment type="cofactor">
    <cofactor evidence="1">
        <name>Zn(2+)</name>
        <dbReference type="ChEBI" id="CHEBI:29105"/>
    </cofactor>
    <text evidence="1">Binds 2 Zn(2+) ions per subunit.</text>
</comment>
<comment type="subunit">
    <text evidence="1">The RNAP catalytic core consists of 2 alpha, 1 beta, 1 beta' and 1 omega subunit. When a sigma factor is associated with the core the holoenzyme is formed, which can initiate transcription.</text>
</comment>
<comment type="similarity">
    <text evidence="1">Belongs to the RNA polymerase beta' chain family.</text>
</comment>
<feature type="chain" id="PRO_1000086392" description="DNA-directed RNA polymerase subunit beta'">
    <location>
        <begin position="1"/>
        <end position="1400"/>
    </location>
</feature>
<feature type="binding site" evidence="1">
    <location>
        <position position="71"/>
    </location>
    <ligand>
        <name>Zn(2+)</name>
        <dbReference type="ChEBI" id="CHEBI:29105"/>
        <label>1</label>
    </ligand>
</feature>
<feature type="binding site" evidence="1">
    <location>
        <position position="73"/>
    </location>
    <ligand>
        <name>Zn(2+)</name>
        <dbReference type="ChEBI" id="CHEBI:29105"/>
        <label>1</label>
    </ligand>
</feature>
<feature type="binding site" evidence="1">
    <location>
        <position position="86"/>
    </location>
    <ligand>
        <name>Zn(2+)</name>
        <dbReference type="ChEBI" id="CHEBI:29105"/>
        <label>1</label>
    </ligand>
</feature>
<feature type="binding site" evidence="1">
    <location>
        <position position="89"/>
    </location>
    <ligand>
        <name>Zn(2+)</name>
        <dbReference type="ChEBI" id="CHEBI:29105"/>
        <label>1</label>
    </ligand>
</feature>
<feature type="binding site" evidence="1">
    <location>
        <position position="462"/>
    </location>
    <ligand>
        <name>Mg(2+)</name>
        <dbReference type="ChEBI" id="CHEBI:18420"/>
    </ligand>
</feature>
<feature type="binding site" evidence="1">
    <location>
        <position position="464"/>
    </location>
    <ligand>
        <name>Mg(2+)</name>
        <dbReference type="ChEBI" id="CHEBI:18420"/>
    </ligand>
</feature>
<feature type="binding site" evidence="1">
    <location>
        <position position="466"/>
    </location>
    <ligand>
        <name>Mg(2+)</name>
        <dbReference type="ChEBI" id="CHEBI:18420"/>
    </ligand>
</feature>
<feature type="binding site" evidence="1">
    <location>
        <position position="811"/>
    </location>
    <ligand>
        <name>Zn(2+)</name>
        <dbReference type="ChEBI" id="CHEBI:29105"/>
        <label>2</label>
    </ligand>
</feature>
<feature type="binding site" evidence="1">
    <location>
        <position position="885"/>
    </location>
    <ligand>
        <name>Zn(2+)</name>
        <dbReference type="ChEBI" id="CHEBI:29105"/>
        <label>2</label>
    </ligand>
</feature>
<feature type="binding site" evidence="1">
    <location>
        <position position="892"/>
    </location>
    <ligand>
        <name>Zn(2+)</name>
        <dbReference type="ChEBI" id="CHEBI:29105"/>
        <label>2</label>
    </ligand>
</feature>
<feature type="binding site" evidence="1">
    <location>
        <position position="895"/>
    </location>
    <ligand>
        <name>Zn(2+)</name>
        <dbReference type="ChEBI" id="CHEBI:29105"/>
        <label>2</label>
    </ligand>
</feature>
<proteinExistence type="inferred from homology"/>
<name>RPOC_BRUO2</name>
<organism>
    <name type="scientific">Brucella ovis (strain ATCC 25840 / 63/290 / NCTC 10512)</name>
    <dbReference type="NCBI Taxonomy" id="444178"/>
    <lineage>
        <taxon>Bacteria</taxon>
        <taxon>Pseudomonadati</taxon>
        <taxon>Pseudomonadota</taxon>
        <taxon>Alphaproteobacteria</taxon>
        <taxon>Hyphomicrobiales</taxon>
        <taxon>Brucellaceae</taxon>
        <taxon>Brucella/Ochrobactrum group</taxon>
        <taxon>Brucella</taxon>
    </lineage>
</organism>
<accession>A5VR14</accession>
<evidence type="ECO:0000255" key="1">
    <source>
        <dbReference type="HAMAP-Rule" id="MF_01322"/>
    </source>
</evidence>
<dbReference type="EC" id="2.7.7.6" evidence="1"/>
<dbReference type="EMBL" id="CP000708">
    <property type="protein sequence ID" value="ABQ61215.1"/>
    <property type="molecule type" value="Genomic_DNA"/>
</dbReference>
<dbReference type="RefSeq" id="WP_004688463.1">
    <property type="nucleotide sequence ID" value="NC_009505.1"/>
</dbReference>
<dbReference type="SMR" id="A5VR14"/>
<dbReference type="GeneID" id="97533518"/>
<dbReference type="KEGG" id="bov:BOV_1204"/>
<dbReference type="HOGENOM" id="CLU_000524_3_1_5"/>
<dbReference type="PhylomeDB" id="A5VR14"/>
<dbReference type="Proteomes" id="UP000006383">
    <property type="component" value="Chromosome I"/>
</dbReference>
<dbReference type="GO" id="GO:0000428">
    <property type="term" value="C:DNA-directed RNA polymerase complex"/>
    <property type="evidence" value="ECO:0007669"/>
    <property type="project" value="UniProtKB-KW"/>
</dbReference>
<dbReference type="GO" id="GO:0003677">
    <property type="term" value="F:DNA binding"/>
    <property type="evidence" value="ECO:0007669"/>
    <property type="project" value="UniProtKB-UniRule"/>
</dbReference>
<dbReference type="GO" id="GO:0003899">
    <property type="term" value="F:DNA-directed RNA polymerase activity"/>
    <property type="evidence" value="ECO:0007669"/>
    <property type="project" value="UniProtKB-UniRule"/>
</dbReference>
<dbReference type="GO" id="GO:0000287">
    <property type="term" value="F:magnesium ion binding"/>
    <property type="evidence" value="ECO:0007669"/>
    <property type="project" value="UniProtKB-UniRule"/>
</dbReference>
<dbReference type="GO" id="GO:0008270">
    <property type="term" value="F:zinc ion binding"/>
    <property type="evidence" value="ECO:0007669"/>
    <property type="project" value="UniProtKB-UniRule"/>
</dbReference>
<dbReference type="GO" id="GO:0006351">
    <property type="term" value="P:DNA-templated transcription"/>
    <property type="evidence" value="ECO:0007669"/>
    <property type="project" value="UniProtKB-UniRule"/>
</dbReference>
<dbReference type="CDD" id="cd02655">
    <property type="entry name" value="RNAP_beta'_C"/>
    <property type="match status" value="1"/>
</dbReference>
<dbReference type="CDD" id="cd01609">
    <property type="entry name" value="RNAP_beta'_N"/>
    <property type="match status" value="1"/>
</dbReference>
<dbReference type="FunFam" id="4.10.860.120:FF:000001">
    <property type="entry name" value="DNA-directed RNA polymerase subunit beta"/>
    <property type="match status" value="1"/>
</dbReference>
<dbReference type="Gene3D" id="1.10.132.30">
    <property type="match status" value="1"/>
</dbReference>
<dbReference type="Gene3D" id="1.10.150.390">
    <property type="match status" value="1"/>
</dbReference>
<dbReference type="Gene3D" id="1.10.1790.20">
    <property type="match status" value="1"/>
</dbReference>
<dbReference type="Gene3D" id="1.10.40.90">
    <property type="match status" value="1"/>
</dbReference>
<dbReference type="Gene3D" id="2.40.40.20">
    <property type="match status" value="1"/>
</dbReference>
<dbReference type="Gene3D" id="2.40.50.100">
    <property type="match status" value="3"/>
</dbReference>
<dbReference type="Gene3D" id="4.10.860.120">
    <property type="entry name" value="RNA polymerase II, clamp domain"/>
    <property type="match status" value="1"/>
</dbReference>
<dbReference type="Gene3D" id="1.10.274.100">
    <property type="entry name" value="RNA polymerase Rpb1, domain 3"/>
    <property type="match status" value="1"/>
</dbReference>
<dbReference type="HAMAP" id="MF_01322">
    <property type="entry name" value="RNApol_bact_RpoC"/>
    <property type="match status" value="1"/>
</dbReference>
<dbReference type="InterPro" id="IPR045867">
    <property type="entry name" value="DNA-dir_RpoC_beta_prime"/>
</dbReference>
<dbReference type="InterPro" id="IPR012754">
    <property type="entry name" value="DNA-dir_RpoC_beta_prime_bact"/>
</dbReference>
<dbReference type="InterPro" id="IPR000722">
    <property type="entry name" value="RNA_pol_asu"/>
</dbReference>
<dbReference type="InterPro" id="IPR006592">
    <property type="entry name" value="RNA_pol_N"/>
</dbReference>
<dbReference type="InterPro" id="IPR007080">
    <property type="entry name" value="RNA_pol_Rpb1_1"/>
</dbReference>
<dbReference type="InterPro" id="IPR007066">
    <property type="entry name" value="RNA_pol_Rpb1_3"/>
</dbReference>
<dbReference type="InterPro" id="IPR042102">
    <property type="entry name" value="RNA_pol_Rpb1_3_sf"/>
</dbReference>
<dbReference type="InterPro" id="IPR007083">
    <property type="entry name" value="RNA_pol_Rpb1_4"/>
</dbReference>
<dbReference type="InterPro" id="IPR007081">
    <property type="entry name" value="RNA_pol_Rpb1_5"/>
</dbReference>
<dbReference type="InterPro" id="IPR044893">
    <property type="entry name" value="RNA_pol_Rpb1_clamp_domain"/>
</dbReference>
<dbReference type="InterPro" id="IPR038120">
    <property type="entry name" value="Rpb1_funnel_sf"/>
</dbReference>
<dbReference type="NCBIfam" id="TIGR02386">
    <property type="entry name" value="rpoC_TIGR"/>
    <property type="match status" value="1"/>
</dbReference>
<dbReference type="PANTHER" id="PTHR19376">
    <property type="entry name" value="DNA-DIRECTED RNA POLYMERASE"/>
    <property type="match status" value="1"/>
</dbReference>
<dbReference type="PANTHER" id="PTHR19376:SF54">
    <property type="entry name" value="DNA-DIRECTED RNA POLYMERASE SUBUNIT BETA"/>
    <property type="match status" value="1"/>
</dbReference>
<dbReference type="Pfam" id="PF04997">
    <property type="entry name" value="RNA_pol_Rpb1_1"/>
    <property type="match status" value="1"/>
</dbReference>
<dbReference type="Pfam" id="PF00623">
    <property type="entry name" value="RNA_pol_Rpb1_2"/>
    <property type="match status" value="1"/>
</dbReference>
<dbReference type="Pfam" id="PF04983">
    <property type="entry name" value="RNA_pol_Rpb1_3"/>
    <property type="match status" value="1"/>
</dbReference>
<dbReference type="Pfam" id="PF05000">
    <property type="entry name" value="RNA_pol_Rpb1_4"/>
    <property type="match status" value="1"/>
</dbReference>
<dbReference type="Pfam" id="PF04998">
    <property type="entry name" value="RNA_pol_Rpb1_5"/>
    <property type="match status" value="1"/>
</dbReference>
<dbReference type="SMART" id="SM00663">
    <property type="entry name" value="RPOLA_N"/>
    <property type="match status" value="1"/>
</dbReference>
<dbReference type="SUPFAM" id="SSF64484">
    <property type="entry name" value="beta and beta-prime subunits of DNA dependent RNA-polymerase"/>
    <property type="match status" value="1"/>
</dbReference>
<gene>
    <name evidence="1" type="primary">rpoC</name>
    <name type="ordered locus">BOV_1204</name>
</gene>
<sequence length="1400" mass="155600">MNQEVMNLFNPQAPAQTFDSIRISIASPEKILSWSYGEIKKPETINYRTFKPERDGLFCARIFGPIKDYECLCGKYKRMKYKGIICEKCGVEVTLSRVRRERMGHIELAAPVAHIWFLKSLPSRIGTLLDMTLKDIERVLYFENYIVTEPGLTSLKEHQLLSEEEYMIAVDEFGEDQFTALIGAEAIYELLASMELEKIAADLRVDLAETTSDLKQKKLMKRLKIVENFLESGNRPEWMIMKIVPVIPPDLRPLVPLDGGRFATSDLNDLYRRVINRNNRLKRLIELRAPGIIIRNEKRMLQEAVDALFDNGRRGRVITGANKRPLKSLSDMLKGKQGRFRQNLLGKRVDYSGRSVIVTGPELKLHQCGLPKKMALELFKPFIYARLDAKGYSSTVKQAKKLVEKERPEVWDILDEVIREHPVLLNRAPTLHRLGIQAFEPTLIEGKAIQLHPLVCTAFNADFDGDQMAVHVPLSLEAQLEARVLMMSTNNILHPANGAPIIVPSQDMVLGLYYLSIVAEKEPGEGMIFADMGELQHALENKVVTLHTKIKGRFKTVDAEGNPVSKIYDTTPGRMIMGELLPKNVNVPFDICNQEMTKKNISKMIDHVYRHCGQKETVIFCDRIMQLGFAHACRAGISFGKDDMVIPESKAKIVAETEALTTEYEQQYNDGLITQGEKYNKVVDAWGKATDKITEEMMARLKAVEFDPVTGRQKQMNSVYMMSHSGARGSVNQMRQLGGMRGLMAKPSGEIIETPIISNFKEGLTVNEYFNSTHGARKGLADTALKTANSGYLTRRLVDVAQDAIISEVDCGAEIGLTMQPIVDAGQIVASIGQRVLGRTALDPILHPVTGEVIVEAGRMIEEKDVEIIEKAGIQSIRIRSALTCETRNGVCAKCYGRDLARGTPVNQGEAVGVIAAQSIGEPGTQLTMRTFHLGGTAQVVDSSYLEASYEGTVKLRNRNVVRNSDGNLVVMGRNMAVLILDATGKERAVHRVTYGSRLFVDEGDTVKRGQRIAEWDPYTRPIMTEVEGYVEFEDLVDGLSVSETADESTGITKRVVIDWRSTPRGSDLKPAMVIKDKAGKILKLSKGGDARFLLSVESILSVEPGAHVKAGDVIARLPMESAKTKDITGGLPRVAELFEARRPKDHAIIAEIDGTVRFGRDYKNKRRIIIEPNDDTIEPVEYLIPKGKPFHLQDGDVIEKGEYILDGNPAPHDILAIKGVEALASYLVNEIQEVYRLQGVLINDKHIEVIVRQMLQKVEITESGDTGYIPGDHVDRIELEEINERLIEEGKKPGSGNPVLLGITKASLQTPSFISAASFQETTRVLTEAAVAGKMDTLQGLKENVIVGRLIPAGTGGMTNQIRRIATARDELIIDERRKTSGSAEANAMLVDMTNNAAE</sequence>
<reference key="1">
    <citation type="journal article" date="2009" name="PLoS ONE">
        <title>Genome degradation in Brucella ovis corresponds with narrowing of its host range and tissue tropism.</title>
        <authorList>
            <person name="Tsolis R.M."/>
            <person name="Seshadri R."/>
            <person name="Santos R.L."/>
            <person name="Sangari F.J."/>
            <person name="Lobo J.M."/>
            <person name="de Jong M.F."/>
            <person name="Ren Q."/>
            <person name="Myers G."/>
            <person name="Brinkac L.M."/>
            <person name="Nelson W.C."/>
            <person name="Deboy R.T."/>
            <person name="Angiuoli S."/>
            <person name="Khouri H."/>
            <person name="Dimitrov G."/>
            <person name="Robinson J.R."/>
            <person name="Mulligan S."/>
            <person name="Walker R.L."/>
            <person name="Elzer P.E."/>
            <person name="Hassan K.A."/>
            <person name="Paulsen I.T."/>
        </authorList>
    </citation>
    <scope>NUCLEOTIDE SEQUENCE [LARGE SCALE GENOMIC DNA]</scope>
    <source>
        <strain>ATCC 25840 / 63/290 / NCTC 10512</strain>
    </source>
</reference>
<keyword id="KW-0240">DNA-directed RNA polymerase</keyword>
<keyword id="KW-0460">Magnesium</keyword>
<keyword id="KW-0479">Metal-binding</keyword>
<keyword id="KW-0548">Nucleotidyltransferase</keyword>
<keyword id="KW-0804">Transcription</keyword>
<keyword id="KW-0808">Transferase</keyword>
<keyword id="KW-0862">Zinc</keyword>
<protein>
    <recommendedName>
        <fullName evidence="1">DNA-directed RNA polymerase subunit beta'</fullName>
        <shortName evidence="1">RNAP subunit beta'</shortName>
        <ecNumber evidence="1">2.7.7.6</ecNumber>
    </recommendedName>
    <alternativeName>
        <fullName evidence="1">RNA polymerase subunit beta'</fullName>
    </alternativeName>
    <alternativeName>
        <fullName evidence="1">Transcriptase subunit beta'</fullName>
    </alternativeName>
</protein>